<name>COBS_METMA</name>
<organism>
    <name type="scientific">Methanosarcina mazei (strain ATCC BAA-159 / DSM 3647 / Goe1 / Go1 / JCM 11833 / OCM 88)</name>
    <name type="common">Methanosarcina frisia</name>
    <dbReference type="NCBI Taxonomy" id="192952"/>
    <lineage>
        <taxon>Archaea</taxon>
        <taxon>Methanobacteriati</taxon>
        <taxon>Methanobacteriota</taxon>
        <taxon>Stenosarchaea group</taxon>
        <taxon>Methanomicrobia</taxon>
        <taxon>Methanosarcinales</taxon>
        <taxon>Methanosarcinaceae</taxon>
        <taxon>Methanosarcina</taxon>
    </lineage>
</organism>
<reference key="1">
    <citation type="journal article" date="2002" name="J. Mol. Microbiol. Biotechnol.">
        <title>The genome of Methanosarcina mazei: evidence for lateral gene transfer between Bacteria and Archaea.</title>
        <authorList>
            <person name="Deppenmeier U."/>
            <person name="Johann A."/>
            <person name="Hartsch T."/>
            <person name="Merkl R."/>
            <person name="Schmitz R.A."/>
            <person name="Martinez-Arias R."/>
            <person name="Henne A."/>
            <person name="Wiezer A."/>
            <person name="Baeumer S."/>
            <person name="Jacobi C."/>
            <person name="Brueggemann H."/>
            <person name="Lienard T."/>
            <person name="Christmann A."/>
            <person name="Boemecke M."/>
            <person name="Steckel S."/>
            <person name="Bhattacharyya A."/>
            <person name="Lykidis A."/>
            <person name="Overbeek R."/>
            <person name="Klenk H.-P."/>
            <person name="Gunsalus R.P."/>
            <person name="Fritz H.-J."/>
            <person name="Gottschalk G."/>
        </authorList>
    </citation>
    <scope>NUCLEOTIDE SEQUENCE [LARGE SCALE GENOMIC DNA]</scope>
    <source>
        <strain>ATCC BAA-159 / DSM 3647 / Goe1 / Go1 / JCM 11833 / OCM 88</strain>
    </source>
</reference>
<protein>
    <recommendedName>
        <fullName evidence="1">Adenosylcobinamide-GDP ribazoletransferase</fullName>
        <ecNumber evidence="1">2.7.8.26</ecNumber>
    </recommendedName>
    <alternativeName>
        <fullName evidence="1">Cobalamin synthase</fullName>
    </alternativeName>
    <alternativeName>
        <fullName evidence="1">Cobalamin-5'-phosphate synthase</fullName>
    </alternativeName>
</protein>
<feature type="chain" id="PRO_0000146912" description="Adenosylcobinamide-GDP ribazoletransferase">
    <location>
        <begin position="1"/>
        <end position="280"/>
    </location>
</feature>
<feature type="transmembrane region" description="Helical" evidence="1">
    <location>
        <begin position="4"/>
        <end position="24"/>
    </location>
</feature>
<feature type="transmembrane region" description="Helical" evidence="1">
    <location>
        <begin position="34"/>
        <end position="54"/>
    </location>
</feature>
<feature type="transmembrane region" description="Helical" evidence="1">
    <location>
        <begin position="58"/>
        <end position="78"/>
    </location>
</feature>
<feature type="transmembrane region" description="Helical" evidence="1">
    <location>
        <begin position="108"/>
        <end position="128"/>
    </location>
</feature>
<feature type="transmembrane region" description="Helical" evidence="1">
    <location>
        <begin position="136"/>
        <end position="156"/>
    </location>
</feature>
<feature type="transmembrane region" description="Helical" evidence="1">
    <location>
        <begin position="197"/>
        <end position="217"/>
    </location>
</feature>
<feature type="transmembrane region" description="Helical" evidence="1">
    <location>
        <begin position="254"/>
        <end position="274"/>
    </location>
</feature>
<keyword id="KW-1003">Cell membrane</keyword>
<keyword id="KW-0169">Cobalamin biosynthesis</keyword>
<keyword id="KW-0460">Magnesium</keyword>
<keyword id="KW-0472">Membrane</keyword>
<keyword id="KW-0808">Transferase</keyword>
<keyword id="KW-0812">Transmembrane</keyword>
<keyword id="KW-1133">Transmembrane helix</keyword>
<gene>
    <name evidence="1" type="primary">cobS</name>
    <name type="ordered locus">MM_2057</name>
</gene>
<evidence type="ECO:0000255" key="1">
    <source>
        <dbReference type="HAMAP-Rule" id="MF_00719"/>
    </source>
</evidence>
<comment type="function">
    <text evidence="1">Joins adenosylcobinamide-GDP and alpha-ribazole to generate adenosylcobalamin (Ado-cobalamin). Also synthesizes adenosylcobalamin 5'-phosphate from adenosylcobinamide-GDP and alpha-ribazole 5'-phosphate.</text>
</comment>
<comment type="catalytic activity">
    <reaction evidence="1">
        <text>alpha-ribazole + adenosylcob(III)inamide-GDP = adenosylcob(III)alamin + GMP + H(+)</text>
        <dbReference type="Rhea" id="RHEA:16049"/>
        <dbReference type="ChEBI" id="CHEBI:10329"/>
        <dbReference type="ChEBI" id="CHEBI:15378"/>
        <dbReference type="ChEBI" id="CHEBI:18408"/>
        <dbReference type="ChEBI" id="CHEBI:58115"/>
        <dbReference type="ChEBI" id="CHEBI:60487"/>
        <dbReference type="EC" id="2.7.8.26"/>
    </reaction>
</comment>
<comment type="catalytic activity">
    <reaction evidence="1">
        <text>alpha-ribazole 5'-phosphate + adenosylcob(III)inamide-GDP = adenosylcob(III)alamin 5'-phosphate + GMP + H(+)</text>
        <dbReference type="Rhea" id="RHEA:23560"/>
        <dbReference type="ChEBI" id="CHEBI:15378"/>
        <dbReference type="ChEBI" id="CHEBI:57918"/>
        <dbReference type="ChEBI" id="CHEBI:58115"/>
        <dbReference type="ChEBI" id="CHEBI:60487"/>
        <dbReference type="ChEBI" id="CHEBI:60493"/>
        <dbReference type="EC" id="2.7.8.26"/>
    </reaction>
</comment>
<comment type="cofactor">
    <cofactor evidence="1">
        <name>Mg(2+)</name>
        <dbReference type="ChEBI" id="CHEBI:18420"/>
    </cofactor>
</comment>
<comment type="pathway">
    <text evidence="1">Cofactor biosynthesis; adenosylcobalamin biosynthesis; adenosylcobalamin from cob(II)yrinate a,c-diamide: step 7/7.</text>
</comment>
<comment type="subcellular location">
    <subcellularLocation>
        <location evidence="1">Cell membrane</location>
        <topology evidence="1">Multi-pass membrane protein</topology>
    </subcellularLocation>
</comment>
<comment type="similarity">
    <text evidence="1">Belongs to the CobS family.</text>
</comment>
<proteinExistence type="inferred from homology"/>
<accession>Q8PVB4</accession>
<sequence length="280" mass="29618">MNSYLLAFKSGFGFLSTIPVGITMEGIDELMKKIFFYPVVGAVLGLLIGIVAYAGQLVFPGPVLAALIMGFVYYITGFNHLDGVTDMGDGFMAHGSLEKKVKALKDTTLGTGGVAFGILVLLAFYGSIRSVQEEGIAAFGSNLPFLMFASMFIAEVSAKQSMLTIAAFGKPLPRLKEQTYPGLGEMTINGATRKNFLIGFIFGAVVCCLPFGLIGLIPYLAACISALVLLNRSYAHFGGLNGDGIGTANEIGRITALIVIAVTLKLSLNGYLGGLEWTLL</sequence>
<dbReference type="EC" id="2.7.8.26" evidence="1"/>
<dbReference type="EMBL" id="AE008384">
    <property type="protein sequence ID" value="AAM31753.1"/>
    <property type="molecule type" value="Genomic_DNA"/>
</dbReference>
<dbReference type="RefSeq" id="WP_011033989.1">
    <property type="nucleotide sequence ID" value="NC_003901.1"/>
</dbReference>
<dbReference type="GeneID" id="82161112"/>
<dbReference type="KEGG" id="mma:MM_2057"/>
<dbReference type="PATRIC" id="fig|192952.21.peg.2361"/>
<dbReference type="eggNOG" id="arCOG04338">
    <property type="taxonomic scope" value="Archaea"/>
</dbReference>
<dbReference type="HOGENOM" id="CLU_057426_2_0_2"/>
<dbReference type="UniPathway" id="UPA00148">
    <property type="reaction ID" value="UER00238"/>
</dbReference>
<dbReference type="Proteomes" id="UP000000595">
    <property type="component" value="Chromosome"/>
</dbReference>
<dbReference type="GO" id="GO:0005886">
    <property type="term" value="C:plasma membrane"/>
    <property type="evidence" value="ECO:0007669"/>
    <property type="project" value="UniProtKB-SubCell"/>
</dbReference>
<dbReference type="GO" id="GO:0051073">
    <property type="term" value="F:adenosylcobinamide-GDP ribazoletransferase activity"/>
    <property type="evidence" value="ECO:0007669"/>
    <property type="project" value="UniProtKB-UniRule"/>
</dbReference>
<dbReference type="GO" id="GO:0008818">
    <property type="term" value="F:cobalamin 5'-phosphate synthase activity"/>
    <property type="evidence" value="ECO:0007669"/>
    <property type="project" value="UniProtKB-UniRule"/>
</dbReference>
<dbReference type="GO" id="GO:0009236">
    <property type="term" value="P:cobalamin biosynthetic process"/>
    <property type="evidence" value="ECO:0007669"/>
    <property type="project" value="UniProtKB-UniRule"/>
</dbReference>
<dbReference type="HAMAP" id="MF_00719">
    <property type="entry name" value="CobS"/>
    <property type="match status" value="1"/>
</dbReference>
<dbReference type="InterPro" id="IPR003805">
    <property type="entry name" value="CobS"/>
</dbReference>
<dbReference type="NCBIfam" id="TIGR00317">
    <property type="entry name" value="cobS"/>
    <property type="match status" value="1"/>
</dbReference>
<dbReference type="PANTHER" id="PTHR34148">
    <property type="entry name" value="ADENOSYLCOBINAMIDE-GDP RIBAZOLETRANSFERASE"/>
    <property type="match status" value="1"/>
</dbReference>
<dbReference type="PANTHER" id="PTHR34148:SF1">
    <property type="entry name" value="ADENOSYLCOBINAMIDE-GDP RIBAZOLETRANSFERASE"/>
    <property type="match status" value="1"/>
</dbReference>
<dbReference type="Pfam" id="PF02654">
    <property type="entry name" value="CobS"/>
    <property type="match status" value="1"/>
</dbReference>
<dbReference type="PRINTS" id="PR01036">
    <property type="entry name" value="TCRTETB"/>
</dbReference>